<sequence>MQPYLQLASLRLATTIPLAPRLYDANLLAASGAAMASSMAYIALLCAALAAVVALLRWAYRWSHPRSNGRLPPGSLGLPVIGETLQFFAPNPTCDLSPFVKERIKRYGSIFKTSVVGRPVVVSADPEMNYYVFQQEGKLFESWYPDTFTEIFGRDNVGSLHGFMYKYLKTLVLRLYGQENLKSVLLAETDAACRGSLASWASQPSVELKEGISTMIFDLTAKKLIGYDPSKPSQVNLRKNFGAFICGLISFPLNIPGTAYHECMEGRKNAMKVLRGMMKERMAEPERPCEDFFDHVIQELRREKPLLTETIALDLMFVLLFASFETTALALTIGVKLLTENPKVVDALREEHEAIIRNRKDPNSGVTWAEYKSMTFTSQVIMEIVRLANIVPGIFRKALQDVEIKGYTIPAGWGIMVCPPAVHLNPEIYEDPLAFNPWRWQGKPEITGGTKHFMAFGGGLRFCVGTDLSKVLMATFIHSLVTKYSWRTVKGGNIVRTPGLSFPDGFHIQLFPKN</sequence>
<gene>
    <name type="primary">CYP87A3</name>
    <name type="ordered locus">Os04g0570000</name>
    <name type="ordered locus">LOC_Os04g48170</name>
    <name type="ORF">OSJNBa0088I22.16</name>
</gene>
<dbReference type="EC" id="1.14.-.-"/>
<dbReference type="EMBL" id="AJ459255">
    <property type="protein sequence ID" value="CAD30852.1"/>
    <property type="molecule type" value="mRNA"/>
</dbReference>
<dbReference type="EMBL" id="AL607001">
    <property type="protein sequence ID" value="CAD41584.3"/>
    <property type="status" value="ALT_SEQ"/>
    <property type="molecule type" value="Genomic_DNA"/>
</dbReference>
<dbReference type="EMBL" id="AP008210">
    <property type="protein sequence ID" value="BAF15513.1"/>
    <property type="molecule type" value="Genomic_DNA"/>
</dbReference>
<dbReference type="EMBL" id="AP014960">
    <property type="protein sequence ID" value="BAS90563.1"/>
    <property type="molecule type" value="Genomic_DNA"/>
</dbReference>
<dbReference type="RefSeq" id="XP_015634604.1">
    <property type="nucleotide sequence ID" value="XM_015779118.1"/>
</dbReference>
<dbReference type="SMR" id="Q7XU38"/>
<dbReference type="FunCoup" id="Q7XU38">
    <property type="interactions" value="181"/>
</dbReference>
<dbReference type="STRING" id="39947.Q7XU38"/>
<dbReference type="PaxDb" id="39947-Q7XU38"/>
<dbReference type="EnsemblPlants" id="Os04t0570000-01">
    <property type="protein sequence ID" value="Os04t0570000-01"/>
    <property type="gene ID" value="Os04g0570000"/>
</dbReference>
<dbReference type="Gramene" id="Os04t0570000-01">
    <property type="protein sequence ID" value="Os04t0570000-01"/>
    <property type="gene ID" value="Os04g0570000"/>
</dbReference>
<dbReference type="KEGG" id="dosa:Os04g0570000"/>
<dbReference type="eggNOG" id="KOG0157">
    <property type="taxonomic scope" value="Eukaryota"/>
</dbReference>
<dbReference type="HOGENOM" id="CLU_001570_15_5_1"/>
<dbReference type="InParanoid" id="Q7XU38"/>
<dbReference type="OMA" id="TMIFNLT"/>
<dbReference type="OrthoDB" id="1372046at2759"/>
<dbReference type="Proteomes" id="UP000000763">
    <property type="component" value="Chromosome 4"/>
</dbReference>
<dbReference type="Proteomes" id="UP000059680">
    <property type="component" value="Chromosome 4"/>
</dbReference>
<dbReference type="GO" id="GO:0030659">
    <property type="term" value="C:cytoplasmic vesicle membrane"/>
    <property type="evidence" value="ECO:0007669"/>
    <property type="project" value="UniProtKB-SubCell"/>
</dbReference>
<dbReference type="GO" id="GO:0020037">
    <property type="term" value="F:heme binding"/>
    <property type="evidence" value="ECO:0007669"/>
    <property type="project" value="InterPro"/>
</dbReference>
<dbReference type="GO" id="GO:0005506">
    <property type="term" value="F:iron ion binding"/>
    <property type="evidence" value="ECO:0007669"/>
    <property type="project" value="InterPro"/>
</dbReference>
<dbReference type="GO" id="GO:0004497">
    <property type="term" value="F:monooxygenase activity"/>
    <property type="evidence" value="ECO:0000318"/>
    <property type="project" value="GO_Central"/>
</dbReference>
<dbReference type="GO" id="GO:0016705">
    <property type="term" value="F:oxidoreductase activity, acting on paired donors, with incorporation or reduction of molecular oxygen"/>
    <property type="evidence" value="ECO:0007669"/>
    <property type="project" value="InterPro"/>
</dbReference>
<dbReference type="GO" id="GO:0016132">
    <property type="term" value="P:brassinosteroid biosynthetic process"/>
    <property type="evidence" value="ECO:0000318"/>
    <property type="project" value="GO_Central"/>
</dbReference>
<dbReference type="GO" id="GO:0010268">
    <property type="term" value="P:brassinosteroid homeostasis"/>
    <property type="evidence" value="ECO:0000318"/>
    <property type="project" value="GO_Central"/>
</dbReference>
<dbReference type="CDD" id="cd11043">
    <property type="entry name" value="CYP90-like"/>
    <property type="match status" value="1"/>
</dbReference>
<dbReference type="FunFam" id="1.10.630.10:FF:000020">
    <property type="entry name" value="Cytochrome P450 family protein"/>
    <property type="match status" value="1"/>
</dbReference>
<dbReference type="Gene3D" id="1.10.630.10">
    <property type="entry name" value="Cytochrome P450"/>
    <property type="match status" value="1"/>
</dbReference>
<dbReference type="InterPro" id="IPR001128">
    <property type="entry name" value="Cyt_P450"/>
</dbReference>
<dbReference type="InterPro" id="IPR017972">
    <property type="entry name" value="Cyt_P450_CS"/>
</dbReference>
<dbReference type="InterPro" id="IPR002401">
    <property type="entry name" value="Cyt_P450_E_grp-I"/>
</dbReference>
<dbReference type="InterPro" id="IPR036396">
    <property type="entry name" value="Cyt_P450_sf"/>
</dbReference>
<dbReference type="PANTHER" id="PTHR24286">
    <property type="entry name" value="CYTOCHROME P450 26"/>
    <property type="match status" value="1"/>
</dbReference>
<dbReference type="PANTHER" id="PTHR24286:SF11">
    <property type="entry name" value="CYTOCHROME P450, FAMILY 87, SUBFAMILY A, POLYPEPTIDE 2"/>
    <property type="match status" value="1"/>
</dbReference>
<dbReference type="Pfam" id="PF00067">
    <property type="entry name" value="p450"/>
    <property type="match status" value="1"/>
</dbReference>
<dbReference type="PRINTS" id="PR00463">
    <property type="entry name" value="EP450I"/>
</dbReference>
<dbReference type="PRINTS" id="PR00385">
    <property type="entry name" value="P450"/>
</dbReference>
<dbReference type="SUPFAM" id="SSF48264">
    <property type="entry name" value="Cytochrome P450"/>
    <property type="match status" value="1"/>
</dbReference>
<dbReference type="PROSITE" id="PS00086">
    <property type="entry name" value="CYTOCHROME_P450"/>
    <property type="match status" value="1"/>
</dbReference>
<protein>
    <recommendedName>
        <fullName>Cytochrome P450 87A3</fullName>
        <ecNumber>1.14.-.-</ecNumber>
    </recommendedName>
</protein>
<reference key="1">
    <citation type="journal article" date="2003" name="Plant Physiol.">
        <title>Auxin responsiveness of a novel cytochrome p450 in rice coleoptiles.</title>
        <authorList>
            <person name="Chaban C."/>
            <person name="Waller F."/>
            <person name="Furuya M."/>
            <person name="Nick P."/>
        </authorList>
    </citation>
    <scope>NUCLEOTIDE SEQUENCE [MRNA]</scope>
    <scope>SUBCELLULAR LOCATION</scope>
    <scope>TISSUE SPECIFICITY</scope>
    <scope>INDUCTION</scope>
    <source>
        <strain>cv. Nihonmasari</strain>
    </source>
</reference>
<reference key="2">
    <citation type="journal article" date="2002" name="Nature">
        <title>Sequence and analysis of rice chromosome 4.</title>
        <authorList>
            <person name="Feng Q."/>
            <person name="Zhang Y."/>
            <person name="Hao P."/>
            <person name="Wang S."/>
            <person name="Fu G."/>
            <person name="Huang Y."/>
            <person name="Li Y."/>
            <person name="Zhu J."/>
            <person name="Liu Y."/>
            <person name="Hu X."/>
            <person name="Jia P."/>
            <person name="Zhang Y."/>
            <person name="Zhao Q."/>
            <person name="Ying K."/>
            <person name="Yu S."/>
            <person name="Tang Y."/>
            <person name="Weng Q."/>
            <person name="Zhang L."/>
            <person name="Lu Y."/>
            <person name="Mu J."/>
            <person name="Lu Y."/>
            <person name="Zhang L.S."/>
            <person name="Yu Z."/>
            <person name="Fan D."/>
            <person name="Liu X."/>
            <person name="Lu T."/>
            <person name="Li C."/>
            <person name="Wu Y."/>
            <person name="Sun T."/>
            <person name="Lei H."/>
            <person name="Li T."/>
            <person name="Hu H."/>
            <person name="Guan J."/>
            <person name="Wu M."/>
            <person name="Zhang R."/>
            <person name="Zhou B."/>
            <person name="Chen Z."/>
            <person name="Chen L."/>
            <person name="Jin Z."/>
            <person name="Wang R."/>
            <person name="Yin H."/>
            <person name="Cai Z."/>
            <person name="Ren S."/>
            <person name="Lv G."/>
            <person name="Gu W."/>
            <person name="Zhu G."/>
            <person name="Tu Y."/>
            <person name="Jia J."/>
            <person name="Zhang Y."/>
            <person name="Chen J."/>
            <person name="Kang H."/>
            <person name="Chen X."/>
            <person name="Shao C."/>
            <person name="Sun Y."/>
            <person name="Hu Q."/>
            <person name="Zhang X."/>
            <person name="Zhang W."/>
            <person name="Wang L."/>
            <person name="Ding C."/>
            <person name="Sheng H."/>
            <person name="Gu J."/>
            <person name="Chen S."/>
            <person name="Ni L."/>
            <person name="Zhu F."/>
            <person name="Chen W."/>
            <person name="Lan L."/>
            <person name="Lai Y."/>
            <person name="Cheng Z."/>
            <person name="Gu M."/>
            <person name="Jiang J."/>
            <person name="Li J."/>
            <person name="Hong G."/>
            <person name="Xue Y."/>
            <person name="Han B."/>
        </authorList>
    </citation>
    <scope>NUCLEOTIDE SEQUENCE [LARGE SCALE GENOMIC DNA]</scope>
    <source>
        <strain>cv. Nipponbare</strain>
    </source>
</reference>
<reference key="3">
    <citation type="journal article" date="2005" name="Nature">
        <title>The map-based sequence of the rice genome.</title>
        <authorList>
            <consortium name="International rice genome sequencing project (IRGSP)"/>
        </authorList>
    </citation>
    <scope>NUCLEOTIDE SEQUENCE [LARGE SCALE GENOMIC DNA]</scope>
    <source>
        <strain>cv. Nipponbare</strain>
    </source>
</reference>
<reference key="4">
    <citation type="journal article" date="2008" name="Nucleic Acids Res.">
        <title>The rice annotation project database (RAP-DB): 2008 update.</title>
        <authorList>
            <consortium name="The rice annotation project (RAP)"/>
        </authorList>
    </citation>
    <scope>GENOME REANNOTATION</scope>
    <source>
        <strain>cv. Nipponbare</strain>
    </source>
</reference>
<reference key="5">
    <citation type="journal article" date="2013" name="Rice">
        <title>Improvement of the Oryza sativa Nipponbare reference genome using next generation sequence and optical map data.</title>
        <authorList>
            <person name="Kawahara Y."/>
            <person name="de la Bastide M."/>
            <person name="Hamilton J.P."/>
            <person name="Kanamori H."/>
            <person name="McCombie W.R."/>
            <person name="Ouyang S."/>
            <person name="Schwartz D.C."/>
            <person name="Tanaka T."/>
            <person name="Wu J."/>
            <person name="Zhou S."/>
            <person name="Childs K.L."/>
            <person name="Davidson R.M."/>
            <person name="Lin H."/>
            <person name="Quesada-Ocampo L."/>
            <person name="Vaillancourt B."/>
            <person name="Sakai H."/>
            <person name="Lee S.S."/>
            <person name="Kim J."/>
            <person name="Numa H."/>
            <person name="Itoh T."/>
            <person name="Buell C.R."/>
            <person name="Matsumoto T."/>
        </authorList>
    </citation>
    <scope>GENOME REANNOTATION</scope>
    <source>
        <strain>cv. Nipponbare</strain>
    </source>
</reference>
<evidence type="ECO:0000250" key="1"/>
<evidence type="ECO:0000255" key="2"/>
<evidence type="ECO:0000269" key="3">
    <source>
    </source>
</evidence>
<evidence type="ECO:0000305" key="4"/>
<evidence type="ECO:0000305" key="5">
    <source>
    </source>
</evidence>
<proteinExistence type="evidence at transcript level"/>
<organism>
    <name type="scientific">Oryza sativa subsp. japonica</name>
    <name type="common">Rice</name>
    <dbReference type="NCBI Taxonomy" id="39947"/>
    <lineage>
        <taxon>Eukaryota</taxon>
        <taxon>Viridiplantae</taxon>
        <taxon>Streptophyta</taxon>
        <taxon>Embryophyta</taxon>
        <taxon>Tracheophyta</taxon>
        <taxon>Spermatophyta</taxon>
        <taxon>Magnoliopsida</taxon>
        <taxon>Liliopsida</taxon>
        <taxon>Poales</taxon>
        <taxon>Poaceae</taxon>
        <taxon>BOP clade</taxon>
        <taxon>Oryzoideae</taxon>
        <taxon>Oryzeae</taxon>
        <taxon>Oryzinae</taxon>
        <taxon>Oryza</taxon>
        <taxon>Oryza sativa</taxon>
    </lineage>
</organism>
<feature type="chain" id="PRO_0000052183" description="Cytochrome P450 87A3">
    <location>
        <begin position="1"/>
        <end position="514"/>
    </location>
</feature>
<feature type="transmembrane region" description="Helical" evidence="2">
    <location>
        <begin position="36"/>
        <end position="56"/>
    </location>
</feature>
<feature type="transmembrane region" description="Helical" evidence="2">
    <location>
        <begin position="315"/>
        <end position="335"/>
    </location>
</feature>
<feature type="binding site" description="axial binding residue" evidence="1">
    <location>
        <position position="463"/>
    </location>
    <ligand>
        <name>heme</name>
        <dbReference type="ChEBI" id="CHEBI:30413"/>
    </ligand>
    <ligandPart>
        <name>Fe</name>
        <dbReference type="ChEBI" id="CHEBI:18248"/>
    </ligandPart>
</feature>
<comment type="cofactor">
    <cofactor evidence="1">
        <name>heme</name>
        <dbReference type="ChEBI" id="CHEBI:30413"/>
    </cofactor>
</comment>
<comment type="subcellular location">
    <subcellularLocation>
        <location evidence="5">Cytoplasmic vesicle membrane</location>
    </subcellularLocation>
    <text evidence="4">Associated with vesicular membranes.</text>
</comment>
<comment type="tissue specificity">
    <text evidence="3">Expressed in roots and coleoptiles, but not in leaves.</text>
</comment>
<comment type="induction">
    <text evidence="3">Transiently induced by auxin and light in dark-grown coleoptiles.</text>
</comment>
<comment type="miscellaneous">
    <text>Not induced by auxin in the Yin-Yang mutant, characterized by an elevated growth response of the coleoptile to auxin.</text>
</comment>
<comment type="similarity">
    <text evidence="4">Belongs to the cytochrome P450 family.</text>
</comment>
<comment type="sequence caution" evidence="4">
    <conflict type="erroneous gene model prediction">
        <sequence resource="EMBL-CDS" id="CAD41584"/>
    </conflict>
</comment>
<accession>Q7XU38</accession>
<accession>Q0JAX4</accession>
<accession>Q8LPD0</accession>
<keyword id="KW-0968">Cytoplasmic vesicle</keyword>
<keyword id="KW-0349">Heme</keyword>
<keyword id="KW-0408">Iron</keyword>
<keyword id="KW-0472">Membrane</keyword>
<keyword id="KW-0479">Metal-binding</keyword>
<keyword id="KW-0503">Monooxygenase</keyword>
<keyword id="KW-0560">Oxidoreductase</keyword>
<keyword id="KW-1185">Reference proteome</keyword>
<keyword id="KW-0812">Transmembrane</keyword>
<keyword id="KW-1133">Transmembrane helix</keyword>
<name>C87A3_ORYSJ</name>